<sequence>MQLKIKEIFDQDYTKLEGQKVQIKAWVRSNRDSKKIGFLVLNDGSSLTNLQAVYRVDKISNYEEITAARMWAAVAIEGVIKLTPTAKQPLELEVLNAQILKQSDEDFLLSNNDLSLETLRLNAHLRPRTNLFHAIMKVRATLAFAVHEFMNQNEYSWLAAPLFTGNDAEGAGETFSIQKFDNEEFFGKQTHLSVTGQLQAEAYAQAFGNVYTFGPTFRAEKSHTNRHLAEFWMIEPEMAFVDLKGMQDIVENLIKHVIKAVLEKNQQELEFLAQRNDENLIKKLQKVVDSKFERIEYKDAVKILANAVKSGHQFEDNEIFFGMDLGSEHERYMCETYHQGPVFLQNYPKDIKAFYMKLNDDQQTVASTDLLIPGVGELVGGSQREDNYEKLLKRCQELKMPIESLQWYLDLRRFGYYMSSGFGIGFERLVMYVTGVNNIKDTIPFPRSHGQIEF</sequence>
<protein>
    <recommendedName>
        <fullName evidence="1">Asparagine--tRNA ligase</fullName>
        <ecNumber evidence="1">6.1.1.22</ecNumber>
    </recommendedName>
    <alternativeName>
        <fullName evidence="1">Asparaginyl-tRNA synthetase</fullName>
        <shortName evidence="1">AsnRS</shortName>
    </alternativeName>
</protein>
<proteinExistence type="inferred from homology"/>
<evidence type="ECO:0000255" key="1">
    <source>
        <dbReference type="HAMAP-Rule" id="MF_00534"/>
    </source>
</evidence>
<accession>B5ZBH7</accession>
<comment type="catalytic activity">
    <reaction evidence="1">
        <text>tRNA(Asn) + L-asparagine + ATP = L-asparaginyl-tRNA(Asn) + AMP + diphosphate + H(+)</text>
        <dbReference type="Rhea" id="RHEA:11180"/>
        <dbReference type="Rhea" id="RHEA-COMP:9659"/>
        <dbReference type="Rhea" id="RHEA-COMP:9674"/>
        <dbReference type="ChEBI" id="CHEBI:15378"/>
        <dbReference type="ChEBI" id="CHEBI:30616"/>
        <dbReference type="ChEBI" id="CHEBI:33019"/>
        <dbReference type="ChEBI" id="CHEBI:58048"/>
        <dbReference type="ChEBI" id="CHEBI:78442"/>
        <dbReference type="ChEBI" id="CHEBI:78515"/>
        <dbReference type="ChEBI" id="CHEBI:456215"/>
        <dbReference type="EC" id="6.1.1.22"/>
    </reaction>
</comment>
<comment type="subunit">
    <text evidence="1">Homodimer.</text>
</comment>
<comment type="subcellular location">
    <subcellularLocation>
        <location evidence="1">Cytoplasm</location>
    </subcellularLocation>
</comment>
<comment type="similarity">
    <text evidence="1">Belongs to the class-II aminoacyl-tRNA synthetase family.</text>
</comment>
<dbReference type="EC" id="6.1.1.22" evidence="1"/>
<dbReference type="EMBL" id="CP001184">
    <property type="protein sequence ID" value="ACI59870.1"/>
    <property type="molecule type" value="Genomic_DNA"/>
</dbReference>
<dbReference type="RefSeq" id="WP_012560215.1">
    <property type="nucleotide sequence ID" value="NC_011374.1"/>
</dbReference>
<dbReference type="SMR" id="B5ZBH7"/>
<dbReference type="STRING" id="565575.UUR10_0374"/>
<dbReference type="KEGG" id="uue:UUR10_0374"/>
<dbReference type="eggNOG" id="COG0017">
    <property type="taxonomic scope" value="Bacteria"/>
</dbReference>
<dbReference type="HOGENOM" id="CLU_004553_2_0_14"/>
<dbReference type="OrthoDB" id="9762036at2"/>
<dbReference type="Proteomes" id="UP000002018">
    <property type="component" value="Chromosome"/>
</dbReference>
<dbReference type="GO" id="GO:0005737">
    <property type="term" value="C:cytoplasm"/>
    <property type="evidence" value="ECO:0007669"/>
    <property type="project" value="UniProtKB-SubCell"/>
</dbReference>
<dbReference type="GO" id="GO:0004816">
    <property type="term" value="F:asparagine-tRNA ligase activity"/>
    <property type="evidence" value="ECO:0007669"/>
    <property type="project" value="UniProtKB-UniRule"/>
</dbReference>
<dbReference type="GO" id="GO:0005524">
    <property type="term" value="F:ATP binding"/>
    <property type="evidence" value="ECO:0007669"/>
    <property type="project" value="UniProtKB-UniRule"/>
</dbReference>
<dbReference type="GO" id="GO:0003676">
    <property type="term" value="F:nucleic acid binding"/>
    <property type="evidence" value="ECO:0007669"/>
    <property type="project" value="InterPro"/>
</dbReference>
<dbReference type="GO" id="GO:0006421">
    <property type="term" value="P:asparaginyl-tRNA aminoacylation"/>
    <property type="evidence" value="ECO:0007669"/>
    <property type="project" value="UniProtKB-UniRule"/>
</dbReference>
<dbReference type="CDD" id="cd00776">
    <property type="entry name" value="AsxRS_core"/>
    <property type="match status" value="1"/>
</dbReference>
<dbReference type="CDD" id="cd04318">
    <property type="entry name" value="EcAsnRS_like_N"/>
    <property type="match status" value="1"/>
</dbReference>
<dbReference type="FunFam" id="3.30.930.10:FF:000016">
    <property type="entry name" value="Asparagine--tRNA ligase"/>
    <property type="match status" value="1"/>
</dbReference>
<dbReference type="Gene3D" id="3.30.930.10">
    <property type="entry name" value="Bira Bifunctional Protein, Domain 2"/>
    <property type="match status" value="1"/>
</dbReference>
<dbReference type="Gene3D" id="2.40.50.140">
    <property type="entry name" value="Nucleic acid-binding proteins"/>
    <property type="match status" value="1"/>
</dbReference>
<dbReference type="HAMAP" id="MF_00534">
    <property type="entry name" value="Asn_tRNA_synth"/>
    <property type="match status" value="1"/>
</dbReference>
<dbReference type="InterPro" id="IPR004364">
    <property type="entry name" value="Aa-tRNA-synt_II"/>
</dbReference>
<dbReference type="InterPro" id="IPR006195">
    <property type="entry name" value="aa-tRNA-synth_II"/>
</dbReference>
<dbReference type="InterPro" id="IPR045864">
    <property type="entry name" value="aa-tRNA-synth_II/BPL/LPL"/>
</dbReference>
<dbReference type="InterPro" id="IPR004522">
    <property type="entry name" value="Asn-tRNA-ligase"/>
</dbReference>
<dbReference type="InterPro" id="IPR002312">
    <property type="entry name" value="Asp/Asn-tRNA-synth_IIb"/>
</dbReference>
<dbReference type="InterPro" id="IPR012340">
    <property type="entry name" value="NA-bd_OB-fold"/>
</dbReference>
<dbReference type="InterPro" id="IPR004365">
    <property type="entry name" value="NA-bd_OB_tRNA"/>
</dbReference>
<dbReference type="NCBIfam" id="TIGR00457">
    <property type="entry name" value="asnS"/>
    <property type="match status" value="1"/>
</dbReference>
<dbReference type="NCBIfam" id="NF003037">
    <property type="entry name" value="PRK03932.1"/>
    <property type="match status" value="1"/>
</dbReference>
<dbReference type="PANTHER" id="PTHR22594:SF34">
    <property type="entry name" value="ASPARAGINE--TRNA LIGASE, MITOCHONDRIAL-RELATED"/>
    <property type="match status" value="1"/>
</dbReference>
<dbReference type="PANTHER" id="PTHR22594">
    <property type="entry name" value="ASPARTYL/LYSYL-TRNA SYNTHETASE"/>
    <property type="match status" value="1"/>
</dbReference>
<dbReference type="Pfam" id="PF00152">
    <property type="entry name" value="tRNA-synt_2"/>
    <property type="match status" value="1"/>
</dbReference>
<dbReference type="Pfam" id="PF01336">
    <property type="entry name" value="tRNA_anti-codon"/>
    <property type="match status" value="1"/>
</dbReference>
<dbReference type="PRINTS" id="PR01042">
    <property type="entry name" value="TRNASYNTHASP"/>
</dbReference>
<dbReference type="SUPFAM" id="SSF55681">
    <property type="entry name" value="Class II aaRS and biotin synthetases"/>
    <property type="match status" value="1"/>
</dbReference>
<dbReference type="SUPFAM" id="SSF50249">
    <property type="entry name" value="Nucleic acid-binding proteins"/>
    <property type="match status" value="1"/>
</dbReference>
<dbReference type="PROSITE" id="PS50862">
    <property type="entry name" value="AA_TRNA_LIGASE_II"/>
    <property type="match status" value="1"/>
</dbReference>
<reference key="1">
    <citation type="submission" date="2008-10" db="EMBL/GenBank/DDBJ databases">
        <title>Genome sequence of Ureaplasma urealyticum serovar 10 ATCC-33699.</title>
        <authorList>
            <person name="Shrivastava S."/>
            <person name="Methe B.A."/>
            <person name="Glass J."/>
            <person name="White K."/>
            <person name="Duffy L.B."/>
        </authorList>
    </citation>
    <scope>NUCLEOTIDE SEQUENCE [LARGE SCALE GENOMIC DNA]</scope>
    <source>
        <strain>ATCC 33699 / Western</strain>
    </source>
</reference>
<feature type="chain" id="PRO_1000128219" description="Asparagine--tRNA ligase">
    <location>
        <begin position="1"/>
        <end position="454"/>
    </location>
</feature>
<organism>
    <name type="scientific">Ureaplasma urealyticum serovar 10 (strain ATCC 33699 / Western)</name>
    <dbReference type="NCBI Taxonomy" id="565575"/>
    <lineage>
        <taxon>Bacteria</taxon>
        <taxon>Bacillati</taxon>
        <taxon>Mycoplasmatota</taxon>
        <taxon>Mycoplasmoidales</taxon>
        <taxon>Mycoplasmoidaceae</taxon>
        <taxon>Ureaplasma</taxon>
    </lineage>
</organism>
<name>SYN_UREU1</name>
<gene>
    <name evidence="1" type="primary">asnS</name>
    <name type="ordered locus">UUR10_0374</name>
</gene>
<keyword id="KW-0030">Aminoacyl-tRNA synthetase</keyword>
<keyword id="KW-0067">ATP-binding</keyword>
<keyword id="KW-0963">Cytoplasm</keyword>
<keyword id="KW-0436">Ligase</keyword>
<keyword id="KW-0547">Nucleotide-binding</keyword>
<keyword id="KW-0648">Protein biosynthesis</keyword>